<name>CYSZ_VIBC3</name>
<evidence type="ECO:0000255" key="1">
    <source>
        <dbReference type="HAMAP-Rule" id="MF_00468"/>
    </source>
</evidence>
<keyword id="KW-0028">Amino-acid biosynthesis</keyword>
<keyword id="KW-0997">Cell inner membrane</keyword>
<keyword id="KW-1003">Cell membrane</keyword>
<keyword id="KW-0198">Cysteine biosynthesis</keyword>
<keyword id="KW-0472">Membrane</keyword>
<keyword id="KW-0764">Sulfate transport</keyword>
<keyword id="KW-0812">Transmembrane</keyword>
<keyword id="KW-1133">Transmembrane helix</keyword>
<keyword id="KW-0813">Transport</keyword>
<reference key="1">
    <citation type="submission" date="2007-03" db="EMBL/GenBank/DDBJ databases">
        <authorList>
            <person name="Heidelberg J."/>
        </authorList>
    </citation>
    <scope>NUCLEOTIDE SEQUENCE [LARGE SCALE GENOMIC DNA]</scope>
    <source>
        <strain>ATCC 39541 / Classical Ogawa 395 / O395</strain>
    </source>
</reference>
<reference key="2">
    <citation type="journal article" date="2008" name="PLoS ONE">
        <title>A recalibrated molecular clock and independent origins for the cholera pandemic clones.</title>
        <authorList>
            <person name="Feng L."/>
            <person name="Reeves P.R."/>
            <person name="Lan R."/>
            <person name="Ren Y."/>
            <person name="Gao C."/>
            <person name="Zhou Z."/>
            <person name="Ren Y."/>
            <person name="Cheng J."/>
            <person name="Wang W."/>
            <person name="Wang J."/>
            <person name="Qian W."/>
            <person name="Li D."/>
            <person name="Wang L."/>
        </authorList>
    </citation>
    <scope>NUCLEOTIDE SEQUENCE [LARGE SCALE GENOMIC DNA]</scope>
    <source>
        <strain>ATCC 39541 / Classical Ogawa 395 / O395</strain>
    </source>
</reference>
<organism>
    <name type="scientific">Vibrio cholerae serotype O1 (strain ATCC 39541 / Classical Ogawa 395 / O395)</name>
    <dbReference type="NCBI Taxonomy" id="345073"/>
    <lineage>
        <taxon>Bacteria</taxon>
        <taxon>Pseudomonadati</taxon>
        <taxon>Pseudomonadota</taxon>
        <taxon>Gammaproteobacteria</taxon>
        <taxon>Vibrionales</taxon>
        <taxon>Vibrionaceae</taxon>
        <taxon>Vibrio</taxon>
    </lineage>
</organism>
<accession>A5F2W1</accession>
<accession>C3LYY0</accession>
<feature type="chain" id="PRO_1000072390" description="Sulfate transporter CysZ">
    <location>
        <begin position="1"/>
        <end position="250"/>
    </location>
</feature>
<feature type="transmembrane region" description="Helical" evidence="1">
    <location>
        <begin position="27"/>
        <end position="47"/>
    </location>
</feature>
<feature type="transmembrane region" description="Helical" evidence="1">
    <location>
        <begin position="64"/>
        <end position="84"/>
    </location>
</feature>
<feature type="transmembrane region" description="Helical" evidence="1">
    <location>
        <begin position="150"/>
        <end position="170"/>
    </location>
</feature>
<feature type="transmembrane region" description="Helical" evidence="1">
    <location>
        <begin position="210"/>
        <end position="230"/>
    </location>
</feature>
<proteinExistence type="inferred from homology"/>
<sequence>MQISSRSGFGYFSYGIRLALTPGIRRFVVLPLLANIILVGGAMYYLFSHLDTWISEWIGQLPSFLSWLSYVLWPLLALTILATFSYFFSTLANFIASPFNGLLAEKVEQHLSGERIGEEGVWALVKDVPRILSREWRKLLYVLPKALGLFLLLLIPALGQTLGPIAWFLFTAWMLAIQYCDYPFDNHKISFHDMRNTLKQNQSKAYGFGMLVAFFTSIPIVNLFIVPVAVCGATAMWVMEFKTQHSPLRQ</sequence>
<gene>
    <name evidence="1" type="primary">cysZ</name>
    <name type="ordered locus">VC0395_A0490</name>
    <name type="ordered locus">VC395_0984</name>
</gene>
<comment type="function">
    <text evidence="1">High affinity, high specificity proton-dependent sulfate transporter, which mediates sulfate uptake. Provides the sulfur source for the cysteine synthesis pathway.</text>
</comment>
<comment type="subcellular location">
    <subcellularLocation>
        <location evidence="1">Cell inner membrane</location>
        <topology evidence="1">Multi-pass membrane protein</topology>
    </subcellularLocation>
</comment>
<comment type="similarity">
    <text evidence="1">Belongs to the CysZ family.</text>
</comment>
<protein>
    <recommendedName>
        <fullName evidence="1">Sulfate transporter CysZ</fullName>
    </recommendedName>
</protein>
<dbReference type="EMBL" id="CP000627">
    <property type="protein sequence ID" value="ABQ20415.1"/>
    <property type="molecule type" value="Genomic_DNA"/>
</dbReference>
<dbReference type="EMBL" id="CP001235">
    <property type="protein sequence ID" value="ACP08996.1"/>
    <property type="molecule type" value="Genomic_DNA"/>
</dbReference>
<dbReference type="RefSeq" id="WP_001167409.1">
    <property type="nucleotide sequence ID" value="NZ_JAACZH010000005.1"/>
</dbReference>
<dbReference type="SMR" id="A5F2W1"/>
<dbReference type="KEGG" id="vco:VC0395_A0490"/>
<dbReference type="KEGG" id="vcr:VC395_0984"/>
<dbReference type="PATRIC" id="fig|345073.21.peg.953"/>
<dbReference type="eggNOG" id="COG2981">
    <property type="taxonomic scope" value="Bacteria"/>
</dbReference>
<dbReference type="HOGENOM" id="CLU_070331_1_0_6"/>
<dbReference type="OrthoDB" id="5292355at2"/>
<dbReference type="Proteomes" id="UP000000249">
    <property type="component" value="Chromosome 2"/>
</dbReference>
<dbReference type="GO" id="GO:0005886">
    <property type="term" value="C:plasma membrane"/>
    <property type="evidence" value="ECO:0007669"/>
    <property type="project" value="UniProtKB-SubCell"/>
</dbReference>
<dbReference type="GO" id="GO:0009675">
    <property type="term" value="F:high-affinity sulfate:proton symporter activity"/>
    <property type="evidence" value="ECO:0007669"/>
    <property type="project" value="TreeGrafter"/>
</dbReference>
<dbReference type="GO" id="GO:0019344">
    <property type="term" value="P:cysteine biosynthetic process"/>
    <property type="evidence" value="ECO:0007669"/>
    <property type="project" value="UniProtKB-UniRule"/>
</dbReference>
<dbReference type="GO" id="GO:0000103">
    <property type="term" value="P:sulfate assimilation"/>
    <property type="evidence" value="ECO:0007669"/>
    <property type="project" value="InterPro"/>
</dbReference>
<dbReference type="HAMAP" id="MF_00468">
    <property type="entry name" value="CysZ"/>
    <property type="match status" value="1"/>
</dbReference>
<dbReference type="InterPro" id="IPR050480">
    <property type="entry name" value="CysZ_sulfate_transptr"/>
</dbReference>
<dbReference type="InterPro" id="IPR022985">
    <property type="entry name" value="Sulfate_CysZ"/>
</dbReference>
<dbReference type="NCBIfam" id="NF003433">
    <property type="entry name" value="PRK04949.1"/>
    <property type="match status" value="1"/>
</dbReference>
<dbReference type="PANTHER" id="PTHR37468">
    <property type="entry name" value="SULFATE TRANSPORTER CYSZ"/>
    <property type="match status" value="1"/>
</dbReference>
<dbReference type="PANTHER" id="PTHR37468:SF1">
    <property type="entry name" value="SULFATE TRANSPORTER CYSZ"/>
    <property type="match status" value="1"/>
</dbReference>
<dbReference type="Pfam" id="PF07264">
    <property type="entry name" value="EI24"/>
    <property type="match status" value="1"/>
</dbReference>